<sequence>MTKDYQDFQHLDNENDHHQLQRGPPPAPRLLQRLCSGFRLFLLSLGLSILLLVVVCVITSQNSQLREDLRVLRQNFSNFTVSTEDQVKALTTQGERVGRKMKLVESQLEKHQEDLREDHSRLLLHVKQLVSDVRSLSCQMAALRGNGSERICCPINWVEYEGSCYWFSSSVKPWTEADKYCQLENAHLVVVTSWEEQRFVQQHMGPLNTWIGLTDQNGPWKWVDGTDYETGFKNWRPGQPDDWYGHGLGGGEDCAHFTTDGHWNDDVCRRPYRWVCETELGKAN</sequence>
<proteinExistence type="evidence at protein level"/>
<keyword id="KW-0106">Calcium</keyword>
<keyword id="KW-0175">Coiled coil</keyword>
<keyword id="KW-1015">Disulfide bond</keyword>
<keyword id="KW-0254">Endocytosis</keyword>
<keyword id="KW-0325">Glycoprotein</keyword>
<keyword id="KW-0430">Lectin</keyword>
<keyword id="KW-0449">Lipoprotein</keyword>
<keyword id="KW-0472">Membrane</keyword>
<keyword id="KW-0479">Metal-binding</keyword>
<keyword id="KW-0564">Palmitate</keyword>
<keyword id="KW-0597">Phosphoprotein</keyword>
<keyword id="KW-0675">Receptor</keyword>
<keyword id="KW-1185">Reference proteome</keyword>
<keyword id="KW-0735">Signal-anchor</keyword>
<keyword id="KW-0812">Transmembrane</keyword>
<keyword id="KW-1133">Transmembrane helix</keyword>
<gene>
    <name type="primary">Asgr1</name>
    <name type="synonym">Asgr-1</name>
</gene>
<organism>
    <name type="scientific">Rattus norvegicus</name>
    <name type="common">Rat</name>
    <dbReference type="NCBI Taxonomy" id="10116"/>
    <lineage>
        <taxon>Eukaryota</taxon>
        <taxon>Metazoa</taxon>
        <taxon>Chordata</taxon>
        <taxon>Craniata</taxon>
        <taxon>Vertebrata</taxon>
        <taxon>Euteleostomi</taxon>
        <taxon>Mammalia</taxon>
        <taxon>Eutheria</taxon>
        <taxon>Euarchontoglires</taxon>
        <taxon>Glires</taxon>
        <taxon>Rodentia</taxon>
        <taxon>Myomorpha</taxon>
        <taxon>Muroidea</taxon>
        <taxon>Muridae</taxon>
        <taxon>Murinae</taxon>
        <taxon>Rattus</taxon>
    </lineage>
</organism>
<protein>
    <recommendedName>
        <fullName>Asialoglycoprotein receptor 1</fullName>
        <shortName>ASGP-R 1</shortName>
        <shortName>ASGPR 1</shortName>
    </recommendedName>
    <alternativeName>
        <fullName>Hepatic lectin 1</fullName>
        <shortName>HL-1</shortName>
        <shortName>rHL-1</shortName>
    </alternativeName>
</protein>
<evidence type="ECO:0000250" key="1"/>
<evidence type="ECO:0000255" key="2"/>
<evidence type="ECO:0000255" key="3">
    <source>
        <dbReference type="PROSITE-ProRule" id="PRU00040"/>
    </source>
</evidence>
<evidence type="ECO:0000269" key="4">
    <source>
    </source>
</evidence>
<evidence type="ECO:0000305" key="5"/>
<comment type="function">
    <text>Mediates the endocytosis of plasma glycoproteins to which the terminal sialic acid residue on their complex carbohydrate moieties has been removed. The receptor recognizes terminal galactose and N-acetylgalactosamine units. After ligand binding to the receptor, the resulting complex is internalized and transported to a sorting organelle, where receptor and ligand are disassociated. The receptor then returns to the cell membrane surface.</text>
</comment>
<comment type="subunit">
    <text evidence="1">Interacts with LASS2.</text>
</comment>
<comment type="subcellular location">
    <subcellularLocation>
        <location>Membrane</location>
        <topology>Single-pass type II membrane protein</topology>
    </subcellularLocation>
</comment>
<comment type="tissue specificity">
    <text>Expressed exclusively in hepatic parenchymal cells.</text>
</comment>
<comment type="PTM">
    <text evidence="1">Phosphorylated on a cytoplasmic Ser residue.</text>
</comment>
<comment type="miscellaneous">
    <text>Calcium is required for ligand binding.</text>
</comment>
<comment type="miscellaneous">
    <text>Two types of rat hepatic lectin have been identified, RHL-1 and RHL-2/3, having a relative abundance of 4:1.</text>
</comment>
<comment type="online information" name="Functional Glycomics Gateway - Glycan Binding">
    <link uri="http://www.functionalglycomics.org/glycomics/GBPServlet?&amp;operationType=view&amp;cbpId=cbp_rat_Ctlect_00128"/>
    <text>Hepatic asialoglycoprotein receptor subunit 1</text>
</comment>
<reference key="1">
    <citation type="journal article" date="1984" name="Proc. Natl. Acad. Sci. U.S.A.">
        <title>Rat liver asialoglycoprotein receptor lacks a cleavable NH2-terminal signal sequence.</title>
        <authorList>
            <person name="Holland E.C."/>
            <person name="Leung J.O."/>
            <person name="Drickamer K."/>
        </authorList>
    </citation>
    <scope>NUCLEOTIDE SEQUENCE [MRNA]</scope>
    <source>
        <tissue>Liver</tissue>
    </source>
</reference>
<reference key="2">
    <citation type="journal article" date="1985" name="J. Biol. Chem.">
        <title>Characterization of the gene encoding the major rat liver asialoglycoprotein receptor.</title>
        <authorList>
            <person name="Leung J.O."/>
            <person name="Holland E.C."/>
            <person name="Drickamer K."/>
        </authorList>
    </citation>
    <scope>NUCLEOTIDE SEQUENCE [GENOMIC DNA]</scope>
</reference>
<reference key="3">
    <citation type="journal article" date="2004" name="Genome Res.">
        <title>The status, quality, and expansion of the NIH full-length cDNA project: the Mammalian Gene Collection (MGC).</title>
        <authorList>
            <consortium name="The MGC Project Team"/>
        </authorList>
    </citation>
    <scope>NUCLEOTIDE SEQUENCE [LARGE SCALE MRNA]</scope>
    <source>
        <tissue>Liver</tissue>
    </source>
</reference>
<reference key="4">
    <citation type="journal article" date="1986" name="Biosci. Rep.">
        <title>Isolation and expression of cDNA clones for a rat liver asialoglycoprotein receptor.</title>
        <authorList>
            <person name="Watts C."/>
        </authorList>
    </citation>
    <scope>NUCLEOTIDE SEQUENCE [MRNA] OF 12-284</scope>
</reference>
<reference key="5">
    <citation type="journal article" date="1996" name="J. Biol. Chem.">
        <title>Fatty acylation of the rat and human asialoglycoprotein receptors. A conserved cytoplasmic cysteine residue is acylated in all receptor subunits.</title>
        <authorList>
            <person name="Zeng F.Y."/>
            <person name="Weigel P.H."/>
        </authorList>
    </citation>
    <scope>PALMITOYLATION AT CYS-35</scope>
</reference>
<dbReference type="EMBL" id="K02817">
    <property type="protein sequence ID" value="AAA42037.1"/>
    <property type="molecule type" value="Genomic_DNA"/>
</dbReference>
<dbReference type="EMBL" id="BC088154">
    <property type="protein sequence ID" value="AAH88154.1"/>
    <property type="molecule type" value="mRNA"/>
</dbReference>
<dbReference type="EMBL" id="M21770">
    <property type="protein sequence ID" value="AAA40764.1"/>
    <property type="molecule type" value="mRNA"/>
</dbReference>
<dbReference type="PIR" id="A92497">
    <property type="entry name" value="LNRTL"/>
</dbReference>
<dbReference type="RefSeq" id="NP_001416802.1">
    <property type="nucleotide sequence ID" value="NM_001429873.1"/>
</dbReference>
<dbReference type="RefSeq" id="NP_036635.1">
    <property type="nucleotide sequence ID" value="NM_012503.2"/>
</dbReference>
<dbReference type="RefSeq" id="XP_006246641.1">
    <property type="nucleotide sequence ID" value="XM_006246579.2"/>
</dbReference>
<dbReference type="SMR" id="P02706"/>
<dbReference type="FunCoup" id="P02706">
    <property type="interactions" value="152"/>
</dbReference>
<dbReference type="IntAct" id="P02706">
    <property type="interactions" value="1"/>
</dbReference>
<dbReference type="STRING" id="10116.ENSRNOP00000025254"/>
<dbReference type="BindingDB" id="P02706"/>
<dbReference type="GlyCosmos" id="P02706">
    <property type="glycosylation" value="3 sites, No reported glycans"/>
</dbReference>
<dbReference type="GlyGen" id="P02706">
    <property type="glycosylation" value="5 sites"/>
</dbReference>
<dbReference type="iPTMnet" id="P02706"/>
<dbReference type="PhosphoSitePlus" id="P02706"/>
<dbReference type="SwissPalm" id="P02706"/>
<dbReference type="PaxDb" id="10116-ENSRNOP00000025254"/>
<dbReference type="Ensembl" id="ENSRNOT00000025254.6">
    <property type="protein sequence ID" value="ENSRNOP00000025254.3"/>
    <property type="gene ID" value="ENSRNOG00000018693.8"/>
</dbReference>
<dbReference type="GeneID" id="24210"/>
<dbReference type="KEGG" id="rno:24210"/>
<dbReference type="UCSC" id="RGD:2160">
    <property type="organism name" value="rat"/>
</dbReference>
<dbReference type="AGR" id="RGD:2160"/>
<dbReference type="CTD" id="432"/>
<dbReference type="RGD" id="2160">
    <property type="gene designation" value="Asgr1"/>
</dbReference>
<dbReference type="eggNOG" id="KOG4297">
    <property type="taxonomic scope" value="Eukaryota"/>
</dbReference>
<dbReference type="GeneTree" id="ENSGT00940000161727"/>
<dbReference type="InParanoid" id="P02706"/>
<dbReference type="OMA" id="NGHQFSK"/>
<dbReference type="OrthoDB" id="2142683at2759"/>
<dbReference type="PhylomeDB" id="P02706"/>
<dbReference type="TreeFam" id="TF352155"/>
<dbReference type="Reactome" id="R-RNO-446203">
    <property type="pathway name" value="Asparagine N-linked glycosylation"/>
</dbReference>
<dbReference type="PRO" id="PR:P02706"/>
<dbReference type="Proteomes" id="UP000002494">
    <property type="component" value="Chromosome 10"/>
</dbReference>
<dbReference type="Bgee" id="ENSRNOG00000018693">
    <property type="expression patterns" value="Expressed in liver and 12 other cell types or tissues"/>
</dbReference>
<dbReference type="GO" id="GO:0009897">
    <property type="term" value="C:external side of plasma membrane"/>
    <property type="evidence" value="ECO:0000318"/>
    <property type="project" value="GO_Central"/>
</dbReference>
<dbReference type="GO" id="GO:0004873">
    <property type="term" value="F:asialoglycoprotein receptor activity"/>
    <property type="evidence" value="ECO:0000314"/>
    <property type="project" value="RGD"/>
</dbReference>
<dbReference type="GO" id="GO:0005537">
    <property type="term" value="F:D-mannose binding"/>
    <property type="evidence" value="ECO:0000318"/>
    <property type="project" value="GO_Central"/>
</dbReference>
<dbReference type="GO" id="GO:0042806">
    <property type="term" value="F:fucose binding"/>
    <property type="evidence" value="ECO:0000318"/>
    <property type="project" value="GO_Central"/>
</dbReference>
<dbReference type="GO" id="GO:0042802">
    <property type="term" value="F:identical protein binding"/>
    <property type="evidence" value="ECO:0000266"/>
    <property type="project" value="RGD"/>
</dbReference>
<dbReference type="GO" id="GO:0046872">
    <property type="term" value="F:metal ion binding"/>
    <property type="evidence" value="ECO:0007669"/>
    <property type="project" value="UniProtKB-KW"/>
</dbReference>
<dbReference type="GO" id="GO:0038187">
    <property type="term" value="F:pattern recognition receptor activity"/>
    <property type="evidence" value="ECO:0000318"/>
    <property type="project" value="GO_Central"/>
</dbReference>
<dbReference type="GO" id="GO:0006897">
    <property type="term" value="P:endocytosis"/>
    <property type="evidence" value="ECO:0007669"/>
    <property type="project" value="UniProtKB-KW"/>
</dbReference>
<dbReference type="GO" id="GO:0006955">
    <property type="term" value="P:immune response"/>
    <property type="evidence" value="ECO:0000318"/>
    <property type="project" value="GO_Central"/>
</dbReference>
<dbReference type="CDD" id="cd03590">
    <property type="entry name" value="CLECT_DC-SIGN_like"/>
    <property type="match status" value="1"/>
</dbReference>
<dbReference type="FunFam" id="3.10.100.10:FF:000041">
    <property type="entry name" value="Asialoglycoprotein receptor 1"/>
    <property type="match status" value="1"/>
</dbReference>
<dbReference type="Gene3D" id="3.10.100.10">
    <property type="entry name" value="Mannose-Binding Protein A, subunit A"/>
    <property type="match status" value="1"/>
</dbReference>
<dbReference type="InterPro" id="IPR001304">
    <property type="entry name" value="C-type_lectin-like"/>
</dbReference>
<dbReference type="InterPro" id="IPR016186">
    <property type="entry name" value="C-type_lectin-like/link_sf"/>
</dbReference>
<dbReference type="InterPro" id="IPR050111">
    <property type="entry name" value="C-type_lectin/snaclec_domain"/>
</dbReference>
<dbReference type="InterPro" id="IPR018378">
    <property type="entry name" value="C-type_lectin_CS"/>
</dbReference>
<dbReference type="InterPro" id="IPR033989">
    <property type="entry name" value="CD209-like_CTLD"/>
</dbReference>
<dbReference type="InterPro" id="IPR016187">
    <property type="entry name" value="CTDL_fold"/>
</dbReference>
<dbReference type="PANTHER" id="PTHR22803">
    <property type="entry name" value="MANNOSE, PHOSPHOLIPASE, LECTIN RECEPTOR RELATED"/>
    <property type="match status" value="1"/>
</dbReference>
<dbReference type="Pfam" id="PF00059">
    <property type="entry name" value="Lectin_C"/>
    <property type="match status" value="1"/>
</dbReference>
<dbReference type="Pfam" id="PF03954">
    <property type="entry name" value="Lectin_N"/>
    <property type="match status" value="1"/>
</dbReference>
<dbReference type="SMART" id="SM00034">
    <property type="entry name" value="CLECT"/>
    <property type="match status" value="1"/>
</dbReference>
<dbReference type="SUPFAM" id="SSF56436">
    <property type="entry name" value="C-type lectin-like"/>
    <property type="match status" value="1"/>
</dbReference>
<dbReference type="PROSITE" id="PS00615">
    <property type="entry name" value="C_TYPE_LECTIN_1"/>
    <property type="match status" value="1"/>
</dbReference>
<dbReference type="PROSITE" id="PS50041">
    <property type="entry name" value="C_TYPE_LECTIN_2"/>
    <property type="match status" value="1"/>
</dbReference>
<feature type="chain" id="PRO_0000046653" description="Asialoglycoprotein receptor 1">
    <location>
        <begin position="1"/>
        <end position="284"/>
    </location>
</feature>
<feature type="topological domain" description="Cytoplasmic" evidence="2">
    <location>
        <begin position="1"/>
        <end position="39"/>
    </location>
</feature>
<feature type="transmembrane region" description="Helical; Signal-anchor for type II membrane protein" evidence="2">
    <location>
        <begin position="40"/>
        <end position="60"/>
    </location>
</feature>
<feature type="topological domain" description="Extracellular" evidence="2">
    <location>
        <begin position="61"/>
        <end position="284"/>
    </location>
</feature>
<feature type="domain" description="C-type lectin" evidence="3">
    <location>
        <begin position="160"/>
        <end position="277"/>
    </location>
</feature>
<feature type="coiled-coil region" evidence="2">
    <location>
        <begin position="58"/>
        <end position="122"/>
    </location>
</feature>
<feature type="short sequence motif" description="Endocytosis signal" evidence="2">
    <location>
        <begin position="5"/>
        <end position="8"/>
    </location>
</feature>
<feature type="binding site" evidence="1">
    <location>
        <position position="190"/>
    </location>
    <ligand>
        <name>Ca(2+)</name>
        <dbReference type="ChEBI" id="CHEBI:29108"/>
        <label>1</label>
    </ligand>
</feature>
<feature type="binding site" evidence="1">
    <location>
        <position position="196"/>
    </location>
    <ligand>
        <name>Ca(2+)</name>
        <dbReference type="ChEBI" id="CHEBI:29108"/>
        <label>1</label>
    </ligand>
</feature>
<feature type="binding site" evidence="1">
    <location>
        <position position="215"/>
    </location>
    <ligand>
        <name>Ca(2+)</name>
        <dbReference type="ChEBI" id="CHEBI:29108"/>
        <label>2</label>
    </ligand>
</feature>
<feature type="binding site" evidence="1">
    <location>
        <position position="239"/>
    </location>
    <ligand>
        <name>Ca(2+)</name>
        <dbReference type="ChEBI" id="CHEBI:29108"/>
        <label>3</label>
    </ligand>
</feature>
<feature type="binding site" evidence="1">
    <location>
        <position position="241"/>
    </location>
    <ligand>
        <name>Ca(2+)</name>
        <dbReference type="ChEBI" id="CHEBI:29108"/>
        <label>3</label>
    </ligand>
</feature>
<feature type="binding site" evidence="1">
    <location>
        <position position="242"/>
    </location>
    <ligand>
        <name>Ca(2+)</name>
        <dbReference type="ChEBI" id="CHEBI:29108"/>
        <label>2</label>
    </ligand>
</feature>
<feature type="binding site" evidence="1">
    <location>
        <position position="252"/>
    </location>
    <ligand>
        <name>Ca(2+)</name>
        <dbReference type="ChEBI" id="CHEBI:29108"/>
        <label>2</label>
    </ligand>
</feature>
<feature type="binding site" evidence="1">
    <location>
        <position position="252"/>
    </location>
    <ligand>
        <name>Ca(2+)</name>
        <dbReference type="ChEBI" id="CHEBI:29108"/>
        <label>3</label>
    </ligand>
</feature>
<feature type="binding site" evidence="1">
    <location>
        <position position="253"/>
    </location>
    <ligand>
        <name>Ca(2+)</name>
        <dbReference type="ChEBI" id="CHEBI:29108"/>
        <label>2</label>
    </ligand>
</feature>
<feature type="binding site" evidence="1">
    <location>
        <position position="264"/>
    </location>
    <ligand>
        <name>Ca(2+)</name>
        <dbReference type="ChEBI" id="CHEBI:29108"/>
        <label>3</label>
    </ligand>
</feature>
<feature type="binding site" evidence="1">
    <location>
        <position position="265"/>
    </location>
    <ligand>
        <name>Ca(2+)</name>
        <dbReference type="ChEBI" id="CHEBI:29108"/>
        <label>3</label>
    </ligand>
</feature>
<feature type="binding site" evidence="1">
    <location>
        <position position="277"/>
    </location>
    <ligand>
        <name>Ca(2+)</name>
        <dbReference type="ChEBI" id="CHEBI:29108"/>
        <label>1</label>
    </ligand>
</feature>
<feature type="lipid moiety-binding region" description="S-palmitoyl cysteine" evidence="4">
    <location>
        <position position="35"/>
    </location>
</feature>
<feature type="glycosylation site" description="N-linked (GlcNAc...) asparagine" evidence="2">
    <location>
        <position position="75"/>
    </location>
</feature>
<feature type="glycosylation site" description="N-linked (GlcNAc...) asparagine" evidence="2">
    <location>
        <position position="78"/>
    </location>
</feature>
<feature type="glycosylation site" description="N-linked (GlcNAc...) asparagine" evidence="2">
    <location>
        <position position="146"/>
    </location>
</feature>
<feature type="disulfide bond" evidence="3">
    <location>
        <begin position="153"/>
        <end position="164"/>
    </location>
</feature>
<feature type="disulfide bond" evidence="3">
    <location>
        <begin position="181"/>
        <end position="276"/>
    </location>
</feature>
<feature type="disulfide bond" evidence="3">
    <location>
        <begin position="254"/>
        <end position="268"/>
    </location>
</feature>
<feature type="sequence conflict" description="In Ref. 1." evidence="5" ref="1">
    <original>Q</original>
    <variation>R</variation>
    <location>
        <position position="61"/>
    </location>
</feature>
<name>ASGR1_RAT</name>
<accession>P02706</accession>